<organism>
    <name type="scientific">Physcomitrium patens</name>
    <name type="common">Spreading-leaved earth moss</name>
    <name type="synonym">Physcomitrella patens</name>
    <dbReference type="NCBI Taxonomy" id="3218"/>
    <lineage>
        <taxon>Eukaryota</taxon>
        <taxon>Viridiplantae</taxon>
        <taxon>Streptophyta</taxon>
        <taxon>Embryophyta</taxon>
        <taxon>Bryophyta</taxon>
        <taxon>Bryophytina</taxon>
        <taxon>Bryopsida</taxon>
        <taxon>Funariidae</taxon>
        <taxon>Funariales</taxon>
        <taxon>Funariaceae</taxon>
        <taxon>Physcomitrium</taxon>
    </lineage>
</organism>
<comment type="subunit">
    <text evidence="1">Homodimer and heterodimers.</text>
</comment>
<comment type="subcellular location">
    <subcellularLocation>
        <location evidence="1">Cell membrane</location>
        <topology evidence="1">Multi-pass membrane protein</topology>
    </subcellularLocation>
</comment>
<comment type="similarity">
    <text evidence="3">Belongs to the Casparian strip membrane proteins (CASP) family.</text>
</comment>
<comment type="sequence caution" evidence="3">
    <conflict type="frameshift">
        <sequence resource="EMBL" id="DC950607"/>
    </conflict>
</comment>
<comment type="sequence caution" evidence="3">
    <conflict type="erroneous gene model prediction">
        <sequence resource="EMBL-CDS" id="EDQ69824"/>
    </conflict>
</comment>
<sequence>MATAWESEYFDKVTPGERERAVPPMVPQQTPPPVYIQPQVSRNGIVASIVLRLLTLIFAVVALAVLASNTGSFQVSTGSATSVKTIKFTILSAFTYLFAVCGVVAVYSLLLIIVEMIDLAVRGFTTHTLVAIFVFVLDQTMAYVLISAASASANGVKVSRDESNITGYKFDISCSNLGIDDYCTKASASVAIAFIAFLFMAITAGVSARRLFKLP</sequence>
<accession>A9SG36</accession>
<reference key="1">
    <citation type="journal article" date="2008" name="Science">
        <title>The Physcomitrella genome reveals evolutionary insights into the conquest of land by plants.</title>
        <authorList>
            <person name="Rensing S.A."/>
            <person name="Lang D."/>
            <person name="Zimmer A.D."/>
            <person name="Terry A."/>
            <person name="Salamov A."/>
            <person name="Shapiro H."/>
            <person name="Nishiyama T."/>
            <person name="Perroud P.-F."/>
            <person name="Lindquist E.A."/>
            <person name="Kamisugi Y."/>
            <person name="Tanahashi T."/>
            <person name="Sakakibara K."/>
            <person name="Fujita T."/>
            <person name="Oishi K."/>
            <person name="Shin-I T."/>
            <person name="Kuroki Y."/>
            <person name="Toyoda A."/>
            <person name="Suzuki Y."/>
            <person name="Hashimoto S.-I."/>
            <person name="Yamaguchi K."/>
            <person name="Sugano S."/>
            <person name="Kohara Y."/>
            <person name="Fujiyama A."/>
            <person name="Anterola A."/>
            <person name="Aoki S."/>
            <person name="Ashton N."/>
            <person name="Barbazuk W.B."/>
            <person name="Barker E."/>
            <person name="Bennetzen J.L."/>
            <person name="Blankenship R."/>
            <person name="Cho S.H."/>
            <person name="Dutcher S.K."/>
            <person name="Estelle M."/>
            <person name="Fawcett J.A."/>
            <person name="Gundlach H."/>
            <person name="Hanada K."/>
            <person name="Heyl A."/>
            <person name="Hicks K.A."/>
            <person name="Hughes J."/>
            <person name="Lohr M."/>
            <person name="Mayer K."/>
            <person name="Melkozernov A."/>
            <person name="Murata T."/>
            <person name="Nelson D.R."/>
            <person name="Pils B."/>
            <person name="Prigge M."/>
            <person name="Reiss B."/>
            <person name="Renner T."/>
            <person name="Rombauts S."/>
            <person name="Rushton P.J."/>
            <person name="Sanderfoot A."/>
            <person name="Schween G."/>
            <person name="Shiu S.-H."/>
            <person name="Stueber K."/>
            <person name="Theodoulou F.L."/>
            <person name="Tu H."/>
            <person name="Van de Peer Y."/>
            <person name="Verrier P.J."/>
            <person name="Waters E."/>
            <person name="Wood A."/>
            <person name="Yang L."/>
            <person name="Cove D."/>
            <person name="Cuming A.C."/>
            <person name="Hasebe M."/>
            <person name="Lucas S."/>
            <person name="Mishler B.D."/>
            <person name="Reski R."/>
            <person name="Grigoriev I.V."/>
            <person name="Quatrano R.S."/>
            <person name="Boore J.L."/>
        </authorList>
    </citation>
    <scope>NUCLEOTIDE SEQUENCE [LARGE SCALE GENOMIC DNA]</scope>
    <source>
        <strain>cv. Gransden 2004</strain>
    </source>
</reference>
<reference key="2">
    <citation type="submission" date="2008-09" db="EMBL/GenBank/DDBJ databases">
        <title>Expressed genes in Physcomitrella patens.</title>
        <authorList>
            <person name="Kohara Y."/>
            <person name="Shin-i T."/>
            <person name="Nishiyama T."/>
            <person name="Suzuki Y."/>
            <person name="Sugano S."/>
            <person name="Hiwatashi Y."/>
            <person name="Hasebe M."/>
        </authorList>
    </citation>
    <scope>NUCLEOTIDE SEQUENCE [LARGE SCALE MRNA]</scope>
    <source>
        <strain>cv. Gransden 2004</strain>
        <tissue>Sporophyte</tissue>
    </source>
</reference>
<reference key="3">
    <citation type="journal article" date="2014" name="Plant Physiol.">
        <title>Functional and evolutionary analysis of the CASPARIAN STRIP MEMBRANE DOMAIN PROTEIN family.</title>
        <authorList>
            <person name="Roppolo D."/>
            <person name="Boeckmann B."/>
            <person name="Pfister A."/>
            <person name="Boutet E."/>
            <person name="Rubio M.C."/>
            <person name="Denervaud-Tendon V."/>
            <person name="Vermeer J.E."/>
            <person name="Gheyselinck J."/>
            <person name="Xenarios I."/>
            <person name="Geldner N."/>
        </authorList>
    </citation>
    <scope>GENE FAMILY</scope>
    <scope>NOMENCLATURE</scope>
</reference>
<evidence type="ECO:0000250" key="1"/>
<evidence type="ECO:0000255" key="2"/>
<evidence type="ECO:0000305" key="3"/>
<feature type="chain" id="PRO_0000418672" description="CASP-like protein UU3">
    <location>
        <begin position="1"/>
        <end position="215"/>
    </location>
</feature>
<feature type="topological domain" description="Cytoplasmic" evidence="2">
    <location>
        <begin position="1"/>
        <end position="44"/>
    </location>
</feature>
<feature type="transmembrane region" description="Helical" evidence="2">
    <location>
        <begin position="45"/>
        <end position="65"/>
    </location>
</feature>
<feature type="topological domain" description="Extracellular" evidence="2">
    <location>
        <begin position="66"/>
        <end position="93"/>
    </location>
</feature>
<feature type="transmembrane region" description="Helical" evidence="2">
    <location>
        <begin position="94"/>
        <end position="114"/>
    </location>
</feature>
<feature type="topological domain" description="Cytoplasmic" evidence="2">
    <location>
        <begin position="115"/>
        <end position="128"/>
    </location>
</feature>
<feature type="transmembrane region" description="Helical" evidence="2">
    <location>
        <begin position="129"/>
        <end position="149"/>
    </location>
</feature>
<feature type="topological domain" description="Extracellular" evidence="2">
    <location>
        <begin position="150"/>
        <end position="185"/>
    </location>
</feature>
<feature type="transmembrane region" description="Helical" evidence="2">
    <location>
        <begin position="186"/>
        <end position="206"/>
    </location>
</feature>
<feature type="topological domain" description="Cytoplasmic" evidence="2">
    <location>
        <begin position="207"/>
        <end position="215"/>
    </location>
</feature>
<feature type="glycosylation site" description="N-linked (GlcNAc...) asparagine" evidence="2">
    <location>
        <position position="164"/>
    </location>
</feature>
<name>CSPLE_PHYPA</name>
<keyword id="KW-1003">Cell membrane</keyword>
<keyword id="KW-0325">Glycoprotein</keyword>
<keyword id="KW-0472">Membrane</keyword>
<keyword id="KW-1185">Reference proteome</keyword>
<keyword id="KW-0812">Transmembrane</keyword>
<keyword id="KW-1133">Transmembrane helix</keyword>
<gene>
    <name type="ORF">PHYPADRAFT_233235</name>
</gene>
<protein>
    <recommendedName>
        <fullName>CASP-like protein UU3</fullName>
        <shortName>PpCASPLUU3</shortName>
    </recommendedName>
</protein>
<proteinExistence type="evidence at transcript level"/>
<dbReference type="EMBL" id="DS544964">
    <property type="protein sequence ID" value="EDQ69824.1"/>
    <property type="status" value="ALT_SEQ"/>
    <property type="molecule type" value="Genomic_DNA"/>
</dbReference>
<dbReference type="EMBL" id="DC950607">
    <property type="status" value="NOT_ANNOTATED_CDS"/>
    <property type="molecule type" value="mRNA"/>
</dbReference>
<dbReference type="RefSeq" id="XP_001765361.1">
    <property type="nucleotide sequence ID" value="XM_001765309.1"/>
</dbReference>
<dbReference type="SMR" id="A9SG36"/>
<dbReference type="PaxDb" id="3218-PP1S75_20V6.2"/>
<dbReference type="EnsemblPlants" id="Pp3c7_13960V3.1">
    <property type="protein sequence ID" value="Pp3c7_13960V3.1"/>
    <property type="gene ID" value="Pp3c7_13960"/>
</dbReference>
<dbReference type="EnsemblPlants" id="Pp3c7_13960V3.2">
    <property type="protein sequence ID" value="Pp3c7_13960V3.2"/>
    <property type="gene ID" value="Pp3c7_13960"/>
</dbReference>
<dbReference type="Gramene" id="Pp3c7_13960V3.1">
    <property type="protein sequence ID" value="Pp3c7_13960V3.1"/>
    <property type="gene ID" value="Pp3c7_13960"/>
</dbReference>
<dbReference type="Gramene" id="Pp3c7_13960V3.2">
    <property type="protein sequence ID" value="Pp3c7_13960V3.2"/>
    <property type="gene ID" value="Pp3c7_13960"/>
</dbReference>
<dbReference type="HOGENOM" id="CLU_1285154_0_0_1"/>
<dbReference type="InParanoid" id="A9SG36"/>
<dbReference type="OMA" id="KFDISCS"/>
<dbReference type="OrthoDB" id="749363at2759"/>
<dbReference type="Proteomes" id="UP000006727">
    <property type="component" value="Chromosome 7"/>
</dbReference>
<dbReference type="GO" id="GO:0005886">
    <property type="term" value="C:plasma membrane"/>
    <property type="evidence" value="ECO:0007669"/>
    <property type="project" value="UniProtKB-SubCell"/>
</dbReference>
<dbReference type="InterPro" id="IPR006459">
    <property type="entry name" value="CASP/CASPL"/>
</dbReference>
<dbReference type="InterPro" id="IPR006702">
    <property type="entry name" value="CASP_dom"/>
</dbReference>
<dbReference type="NCBIfam" id="TIGR01569">
    <property type="entry name" value="A_tha_TIGR01569"/>
    <property type="match status" value="1"/>
</dbReference>
<dbReference type="PANTHER" id="PTHR33573:SF50">
    <property type="entry name" value="CASP-LIKE PROTEIN 4A3"/>
    <property type="match status" value="1"/>
</dbReference>
<dbReference type="PANTHER" id="PTHR33573">
    <property type="entry name" value="CASP-LIKE PROTEIN 4A4"/>
    <property type="match status" value="1"/>
</dbReference>
<dbReference type="Pfam" id="PF04535">
    <property type="entry name" value="CASP_dom"/>
    <property type="match status" value="1"/>
</dbReference>